<feature type="chain" id="PRO_0000288100" description="Dihydrolipoyllysine-residue succinyltransferase component of 2-oxoglutarate dehydrogenase complex">
    <location>
        <begin position="1"/>
        <end position="423"/>
    </location>
</feature>
<feature type="domain" description="Lipoyl-binding" evidence="3">
    <location>
        <begin position="1"/>
        <end position="76"/>
    </location>
</feature>
<feature type="domain" description="Peripheral subunit-binding (PSBD)" evidence="4">
    <location>
        <begin position="128"/>
        <end position="164"/>
    </location>
</feature>
<feature type="region of interest" description="Disordered" evidence="5">
    <location>
        <begin position="76"/>
        <end position="185"/>
    </location>
</feature>
<feature type="compositionally biased region" description="Polar residues" evidence="5">
    <location>
        <begin position="80"/>
        <end position="96"/>
    </location>
</feature>
<feature type="compositionally biased region" description="Basic and acidic residues" evidence="5">
    <location>
        <begin position="99"/>
        <end position="115"/>
    </location>
</feature>
<feature type="compositionally biased region" description="Polar residues" evidence="5">
    <location>
        <begin position="116"/>
        <end position="131"/>
    </location>
</feature>
<feature type="compositionally biased region" description="Basic and acidic residues" evidence="5">
    <location>
        <begin position="153"/>
        <end position="164"/>
    </location>
</feature>
<feature type="compositionally biased region" description="Low complexity" evidence="5">
    <location>
        <begin position="165"/>
        <end position="177"/>
    </location>
</feature>
<feature type="active site" evidence="2">
    <location>
        <position position="394"/>
    </location>
</feature>
<feature type="active site" evidence="2">
    <location>
        <position position="398"/>
    </location>
</feature>
<feature type="modified residue" description="N6-lipoyllysine" evidence="3">
    <location>
        <position position="42"/>
    </location>
</feature>
<protein>
    <recommendedName>
        <fullName>Dihydrolipoyllysine-residue succinyltransferase component of 2-oxoglutarate dehydrogenase complex</fullName>
        <ecNumber evidence="2">2.3.1.61</ecNumber>
    </recommendedName>
    <alternativeName>
        <fullName>2-oxoglutarate dehydrogenase complex component E2</fullName>
        <shortName>OGDC-E2</shortName>
    </alternativeName>
    <alternativeName>
        <fullName>Dihydrolipoamide succinyltransferase component of 2-oxoglutarate dehydrogenase complex</fullName>
    </alternativeName>
</protein>
<accession>Q6GGZ6</accession>
<name>ODO2_STAAR</name>
<sequence>MPEVKVPELAESITEGTIAEWLKNLGDSVEKGEAILELETDKVNVEVVSEEAGVLSEQLASEGDTVEVGQAIAVIGEGSGNASKENSNDNTPQQNDETTNNKKEETTNKSADKAEVNQTNDDNQQRVNATPSARRYARENGVNLAEVSPKTNDVVRKEDIDKKQQAPASTQTTQQAPAKEEKKYNQYPTKPVIREKMSRRKKTAAKKLLEVSNNTAMLTTFNEVDMTNVMELRKRKKEQFMKDHDGTKLGFMSFFTKASVAALKKYPEVNAEIDGDDMITKQYYDIGVAVSTDDGLLVPFVRDCDKKNFAEIEAEIANLAVKAREKKLGLDDMVNGSFTITNGGIFGSMMSTPIINGNQAAILGMHSIITRPIAIDQDTIENRPMMYIALSYDHRIIDGKEAVGFLKTIKELIENPEDLLLES</sequence>
<organism>
    <name type="scientific">Staphylococcus aureus (strain MRSA252)</name>
    <dbReference type="NCBI Taxonomy" id="282458"/>
    <lineage>
        <taxon>Bacteria</taxon>
        <taxon>Bacillati</taxon>
        <taxon>Bacillota</taxon>
        <taxon>Bacilli</taxon>
        <taxon>Bacillales</taxon>
        <taxon>Staphylococcaceae</taxon>
        <taxon>Staphylococcus</taxon>
    </lineage>
</organism>
<proteinExistence type="inferred from homology"/>
<dbReference type="EC" id="2.3.1.61" evidence="2"/>
<dbReference type="EMBL" id="BX571856">
    <property type="protein sequence ID" value="CAG40421.1"/>
    <property type="molecule type" value="Genomic_DNA"/>
</dbReference>
<dbReference type="RefSeq" id="WP_001115431.1">
    <property type="nucleotide sequence ID" value="NC_002952.2"/>
</dbReference>
<dbReference type="SMR" id="Q6GGZ6"/>
<dbReference type="KEGG" id="sar:SAR1424"/>
<dbReference type="HOGENOM" id="CLU_016733_0_0_9"/>
<dbReference type="UniPathway" id="UPA00868">
    <property type="reaction ID" value="UER00840"/>
</dbReference>
<dbReference type="Proteomes" id="UP000000596">
    <property type="component" value="Chromosome"/>
</dbReference>
<dbReference type="GO" id="GO:0005829">
    <property type="term" value="C:cytosol"/>
    <property type="evidence" value="ECO:0007669"/>
    <property type="project" value="TreeGrafter"/>
</dbReference>
<dbReference type="GO" id="GO:0045252">
    <property type="term" value="C:oxoglutarate dehydrogenase complex"/>
    <property type="evidence" value="ECO:0007669"/>
    <property type="project" value="InterPro"/>
</dbReference>
<dbReference type="GO" id="GO:0004149">
    <property type="term" value="F:dihydrolipoyllysine-residue succinyltransferase activity"/>
    <property type="evidence" value="ECO:0007669"/>
    <property type="project" value="UniProtKB-EC"/>
</dbReference>
<dbReference type="GO" id="GO:0033512">
    <property type="term" value="P:L-lysine catabolic process to acetyl-CoA via saccharopine"/>
    <property type="evidence" value="ECO:0007669"/>
    <property type="project" value="UniProtKB-UniPathway"/>
</dbReference>
<dbReference type="GO" id="GO:0006099">
    <property type="term" value="P:tricarboxylic acid cycle"/>
    <property type="evidence" value="ECO:0007669"/>
    <property type="project" value="UniProtKB-KW"/>
</dbReference>
<dbReference type="CDD" id="cd06849">
    <property type="entry name" value="lipoyl_domain"/>
    <property type="match status" value="1"/>
</dbReference>
<dbReference type="FunFam" id="3.30.559.10:FF:000007">
    <property type="entry name" value="Dihydrolipoamide acetyltransferase component of pyruvate dehydrogenase complex"/>
    <property type="match status" value="1"/>
</dbReference>
<dbReference type="Gene3D" id="2.40.50.100">
    <property type="match status" value="1"/>
</dbReference>
<dbReference type="Gene3D" id="3.30.559.10">
    <property type="entry name" value="Chloramphenicol acetyltransferase-like domain"/>
    <property type="match status" value="1"/>
</dbReference>
<dbReference type="Gene3D" id="4.10.320.10">
    <property type="entry name" value="E3-binding domain"/>
    <property type="match status" value="1"/>
</dbReference>
<dbReference type="InterPro" id="IPR003016">
    <property type="entry name" value="2-oxoA_DH_lipoyl-BS"/>
</dbReference>
<dbReference type="InterPro" id="IPR050537">
    <property type="entry name" value="2-oxoacid_dehydrogenase"/>
</dbReference>
<dbReference type="InterPro" id="IPR001078">
    <property type="entry name" value="2-oxoacid_DH_actylTfrase"/>
</dbReference>
<dbReference type="InterPro" id="IPR000089">
    <property type="entry name" value="Biotin_lipoyl"/>
</dbReference>
<dbReference type="InterPro" id="IPR023213">
    <property type="entry name" value="CAT-like_dom_sf"/>
</dbReference>
<dbReference type="InterPro" id="IPR036625">
    <property type="entry name" value="E3-bd_dom_sf"/>
</dbReference>
<dbReference type="InterPro" id="IPR004167">
    <property type="entry name" value="PSBD"/>
</dbReference>
<dbReference type="InterPro" id="IPR011053">
    <property type="entry name" value="Single_hybrid_motif"/>
</dbReference>
<dbReference type="InterPro" id="IPR006255">
    <property type="entry name" value="SucB"/>
</dbReference>
<dbReference type="NCBIfam" id="NF004309">
    <property type="entry name" value="PRK05704.1"/>
    <property type="match status" value="1"/>
</dbReference>
<dbReference type="NCBIfam" id="TIGR01347">
    <property type="entry name" value="sucB"/>
    <property type="match status" value="1"/>
</dbReference>
<dbReference type="PANTHER" id="PTHR43416:SF5">
    <property type="entry name" value="DIHYDROLIPOYLLYSINE-RESIDUE SUCCINYLTRANSFERASE COMPONENT OF 2-OXOGLUTARATE DEHYDROGENASE COMPLEX, MITOCHONDRIAL"/>
    <property type="match status" value="1"/>
</dbReference>
<dbReference type="PANTHER" id="PTHR43416">
    <property type="entry name" value="DIHYDROLIPOYLLYSINE-RESIDUE SUCCINYLTRANSFERASE COMPONENT OF 2-OXOGLUTARATE DEHYDROGENASE COMPLEX, MITOCHONDRIAL-RELATED"/>
    <property type="match status" value="1"/>
</dbReference>
<dbReference type="Pfam" id="PF00198">
    <property type="entry name" value="2-oxoacid_dh"/>
    <property type="match status" value="1"/>
</dbReference>
<dbReference type="Pfam" id="PF00364">
    <property type="entry name" value="Biotin_lipoyl"/>
    <property type="match status" value="1"/>
</dbReference>
<dbReference type="Pfam" id="PF02817">
    <property type="entry name" value="E3_binding"/>
    <property type="match status" value="1"/>
</dbReference>
<dbReference type="SUPFAM" id="SSF52777">
    <property type="entry name" value="CoA-dependent acyltransferases"/>
    <property type="match status" value="1"/>
</dbReference>
<dbReference type="SUPFAM" id="SSF51230">
    <property type="entry name" value="Single hybrid motif"/>
    <property type="match status" value="1"/>
</dbReference>
<dbReference type="PROSITE" id="PS50968">
    <property type="entry name" value="BIOTINYL_LIPOYL"/>
    <property type="match status" value="1"/>
</dbReference>
<dbReference type="PROSITE" id="PS00189">
    <property type="entry name" value="LIPOYL"/>
    <property type="match status" value="1"/>
</dbReference>
<dbReference type="PROSITE" id="PS51826">
    <property type="entry name" value="PSBD"/>
    <property type="match status" value="1"/>
</dbReference>
<evidence type="ECO:0000250" key="1"/>
<evidence type="ECO:0000250" key="2">
    <source>
        <dbReference type="UniProtKB" id="P0AFG6"/>
    </source>
</evidence>
<evidence type="ECO:0000255" key="3">
    <source>
        <dbReference type="PROSITE-ProRule" id="PRU01066"/>
    </source>
</evidence>
<evidence type="ECO:0000255" key="4">
    <source>
        <dbReference type="PROSITE-ProRule" id="PRU01170"/>
    </source>
</evidence>
<evidence type="ECO:0000256" key="5">
    <source>
        <dbReference type="SAM" id="MobiDB-lite"/>
    </source>
</evidence>
<evidence type="ECO:0000305" key="6"/>
<keyword id="KW-0012">Acyltransferase</keyword>
<keyword id="KW-0450">Lipoyl</keyword>
<keyword id="KW-0808">Transferase</keyword>
<keyword id="KW-0816">Tricarboxylic acid cycle</keyword>
<gene>
    <name type="primary">odhB</name>
    <name type="synonym">sucB</name>
    <name type="ordered locus">SAR1424</name>
</gene>
<reference key="1">
    <citation type="journal article" date="2004" name="Proc. Natl. Acad. Sci. U.S.A.">
        <title>Complete genomes of two clinical Staphylococcus aureus strains: evidence for the rapid evolution of virulence and drug resistance.</title>
        <authorList>
            <person name="Holden M.T.G."/>
            <person name="Feil E.J."/>
            <person name="Lindsay J.A."/>
            <person name="Peacock S.J."/>
            <person name="Day N.P.J."/>
            <person name="Enright M.C."/>
            <person name="Foster T.J."/>
            <person name="Moore C.E."/>
            <person name="Hurst L."/>
            <person name="Atkin R."/>
            <person name="Barron A."/>
            <person name="Bason N."/>
            <person name="Bentley S.D."/>
            <person name="Chillingworth C."/>
            <person name="Chillingworth T."/>
            <person name="Churcher C."/>
            <person name="Clark L."/>
            <person name="Corton C."/>
            <person name="Cronin A."/>
            <person name="Doggett J."/>
            <person name="Dowd L."/>
            <person name="Feltwell T."/>
            <person name="Hance Z."/>
            <person name="Harris B."/>
            <person name="Hauser H."/>
            <person name="Holroyd S."/>
            <person name="Jagels K."/>
            <person name="James K.D."/>
            <person name="Lennard N."/>
            <person name="Line A."/>
            <person name="Mayes R."/>
            <person name="Moule S."/>
            <person name="Mungall K."/>
            <person name="Ormond D."/>
            <person name="Quail M.A."/>
            <person name="Rabbinowitsch E."/>
            <person name="Rutherford K.M."/>
            <person name="Sanders M."/>
            <person name="Sharp S."/>
            <person name="Simmonds M."/>
            <person name="Stevens K."/>
            <person name="Whitehead S."/>
            <person name="Barrell B.G."/>
            <person name="Spratt B.G."/>
            <person name="Parkhill J."/>
        </authorList>
    </citation>
    <scope>NUCLEOTIDE SEQUENCE [LARGE SCALE GENOMIC DNA]</scope>
    <source>
        <strain>MRSA252</strain>
    </source>
</reference>
<comment type="function">
    <text evidence="2">E2 component of the 2-oxoglutarate dehydrogenase (OGDH) complex which catalyzes the second step in the conversion of 2-oxoglutarate to succinyl-CoA and CO(2).</text>
</comment>
<comment type="catalytic activity">
    <reaction evidence="2">
        <text>N(6)-[(R)-dihydrolipoyl]-L-lysyl-[protein] + succinyl-CoA = N(6)-[(R)-S(8)-succinyldihydrolipoyl]-L-lysyl-[protein] + CoA</text>
        <dbReference type="Rhea" id="RHEA:15213"/>
        <dbReference type="Rhea" id="RHEA-COMP:10475"/>
        <dbReference type="Rhea" id="RHEA-COMP:20092"/>
        <dbReference type="ChEBI" id="CHEBI:57287"/>
        <dbReference type="ChEBI" id="CHEBI:57292"/>
        <dbReference type="ChEBI" id="CHEBI:83100"/>
        <dbReference type="ChEBI" id="CHEBI:83120"/>
        <dbReference type="EC" id="2.3.1.61"/>
    </reaction>
</comment>
<comment type="cofactor">
    <cofactor evidence="1">
        <name>(R)-lipoate</name>
        <dbReference type="ChEBI" id="CHEBI:83088"/>
    </cofactor>
    <text evidence="1">Binds 1 lipoyl cofactor covalently.</text>
</comment>
<comment type="pathway">
    <text>Amino-acid degradation; L-lysine degradation via saccharopine pathway; glutaryl-CoA from L-lysine: step 6/6.</text>
</comment>
<comment type="subunit">
    <text evidence="2">Forms a 24-polypeptide structural core with octahedral symmetry. Part of the 2-oxoglutarate dehydrogenase (OGDH) complex composed of E1 (2-oxoglutarate dehydrogenase), E2 (dihydrolipoamide succinyltransferase) and E3 (dihydrolipoamide dehydrogenase); the complex contains multiple copies of the three enzymatic components (E1, E2 and E3).</text>
</comment>
<comment type="similarity">
    <text evidence="6">Belongs to the 2-oxoacid dehydrogenase family.</text>
</comment>